<reference key="1">
    <citation type="journal article" date="1998" name="Nature">
        <title>The complete genome of the hyperthermophilic bacterium Aquifex aeolicus.</title>
        <authorList>
            <person name="Deckert G."/>
            <person name="Warren P.V."/>
            <person name="Gaasterland T."/>
            <person name="Young W.G."/>
            <person name="Lenox A.L."/>
            <person name="Graham D.E."/>
            <person name="Overbeek R."/>
            <person name="Snead M.A."/>
            <person name="Keller M."/>
            <person name="Aujay M."/>
            <person name="Huber R."/>
            <person name="Feldman R.A."/>
            <person name="Short J.M."/>
            <person name="Olsen G.J."/>
            <person name="Swanson R.V."/>
        </authorList>
    </citation>
    <scope>NUCLEOTIDE SEQUENCE [LARGE SCALE GENOMIC DNA]</scope>
    <source>
        <strain>VF5</strain>
    </source>
</reference>
<sequence>MKRFRKNNLELELIRELSEIDFYNISAPLNSKEFWKEWQEKFNRANLTRIALRNILRNKRLSPKEYRKVKNSIKKYEDIINYLNALKLTALNARGSFGGYFIEFDEDEEENEGGT</sequence>
<keyword id="KW-1185">Reference proteome</keyword>
<protein>
    <recommendedName>
        <fullName>Uncharacterized protein aq_420</fullName>
    </recommendedName>
</protein>
<name>Y420_AQUAE</name>
<proteinExistence type="predicted"/>
<dbReference type="EMBL" id="AE000657">
    <property type="protein sequence ID" value="AAC06699.1"/>
    <property type="molecule type" value="Genomic_DNA"/>
</dbReference>
<dbReference type="PIR" id="D70338">
    <property type="entry name" value="D70338"/>
</dbReference>
<dbReference type="RefSeq" id="NP_213296.1">
    <property type="nucleotide sequence ID" value="NC_000918.1"/>
</dbReference>
<dbReference type="RefSeq" id="WP_010880234.1">
    <property type="nucleotide sequence ID" value="NC_000918.1"/>
</dbReference>
<dbReference type="SMR" id="O66736"/>
<dbReference type="STRING" id="224324.aq_420"/>
<dbReference type="EnsemblBacteria" id="AAC06699">
    <property type="protein sequence ID" value="AAC06699"/>
    <property type="gene ID" value="aq_420"/>
</dbReference>
<dbReference type="KEGG" id="aae:aq_420"/>
<dbReference type="eggNOG" id="ENOG502ZS14">
    <property type="taxonomic scope" value="Bacteria"/>
</dbReference>
<dbReference type="HOGENOM" id="CLU_2142463_0_0_0"/>
<dbReference type="InParanoid" id="O66736"/>
<dbReference type="OrthoDB" id="14472at2"/>
<dbReference type="Proteomes" id="UP000000798">
    <property type="component" value="Chromosome"/>
</dbReference>
<gene>
    <name type="ordered locus">aq_420</name>
</gene>
<organism>
    <name type="scientific">Aquifex aeolicus (strain VF5)</name>
    <dbReference type="NCBI Taxonomy" id="224324"/>
    <lineage>
        <taxon>Bacteria</taxon>
        <taxon>Pseudomonadati</taxon>
        <taxon>Aquificota</taxon>
        <taxon>Aquificia</taxon>
        <taxon>Aquificales</taxon>
        <taxon>Aquificaceae</taxon>
        <taxon>Aquifex</taxon>
    </lineage>
</organism>
<feature type="chain" id="PRO_0000186859" description="Uncharacterized protein aq_420">
    <location>
        <begin position="1"/>
        <end position="115"/>
    </location>
</feature>
<accession>O66736</accession>